<protein>
    <recommendedName>
        <fullName evidence="1">Ribosomal RNA large subunit methyltransferase F</fullName>
        <ecNumber evidence="1">2.1.1.181</ecNumber>
    </recommendedName>
    <alternativeName>
        <fullName evidence="1">23S rRNA mA1618 methyltransferase</fullName>
    </alternativeName>
    <alternativeName>
        <fullName evidence="1">rRNA adenine N-6-methyltransferase</fullName>
    </alternativeName>
</protein>
<organism>
    <name type="scientific">Vibrio vulnificus (strain YJ016)</name>
    <dbReference type="NCBI Taxonomy" id="196600"/>
    <lineage>
        <taxon>Bacteria</taxon>
        <taxon>Pseudomonadati</taxon>
        <taxon>Pseudomonadota</taxon>
        <taxon>Gammaproteobacteria</taxon>
        <taxon>Vibrionales</taxon>
        <taxon>Vibrionaceae</taxon>
        <taxon>Vibrio</taxon>
    </lineage>
</organism>
<dbReference type="EC" id="2.1.1.181" evidence="1"/>
<dbReference type="EMBL" id="BA000037">
    <property type="protein sequence ID" value="BAC94252.1"/>
    <property type="molecule type" value="Genomic_DNA"/>
</dbReference>
<dbReference type="RefSeq" id="WP_011150125.1">
    <property type="nucleotide sequence ID" value="NC_005139.1"/>
</dbReference>
<dbReference type="SMR" id="Q7MLD9"/>
<dbReference type="STRING" id="672.VV93_v1c13980"/>
<dbReference type="KEGG" id="vvy:VV1488"/>
<dbReference type="PATRIC" id="fig|196600.6.peg.1474"/>
<dbReference type="eggNOG" id="COG3129">
    <property type="taxonomic scope" value="Bacteria"/>
</dbReference>
<dbReference type="HOGENOM" id="CLU_027534_3_0_6"/>
<dbReference type="Proteomes" id="UP000002675">
    <property type="component" value="Chromosome I"/>
</dbReference>
<dbReference type="GO" id="GO:0005737">
    <property type="term" value="C:cytoplasm"/>
    <property type="evidence" value="ECO:0007669"/>
    <property type="project" value="UniProtKB-SubCell"/>
</dbReference>
<dbReference type="GO" id="GO:0052907">
    <property type="term" value="F:23S rRNA (adenine(1618)-N(6))-methyltransferase activity"/>
    <property type="evidence" value="ECO:0007669"/>
    <property type="project" value="UniProtKB-EC"/>
</dbReference>
<dbReference type="GO" id="GO:0070475">
    <property type="term" value="P:rRNA base methylation"/>
    <property type="evidence" value="ECO:0007669"/>
    <property type="project" value="TreeGrafter"/>
</dbReference>
<dbReference type="Gene3D" id="3.40.50.150">
    <property type="entry name" value="Vaccinia Virus protein VP39"/>
    <property type="match status" value="1"/>
</dbReference>
<dbReference type="HAMAP" id="MF_01848">
    <property type="entry name" value="23SrRNA_methyltr_F"/>
    <property type="match status" value="1"/>
</dbReference>
<dbReference type="InterPro" id="IPR010286">
    <property type="entry name" value="METTL16/RlmF"/>
</dbReference>
<dbReference type="InterPro" id="IPR016909">
    <property type="entry name" value="rRNA_lsu_MeTfrase_F"/>
</dbReference>
<dbReference type="InterPro" id="IPR029063">
    <property type="entry name" value="SAM-dependent_MTases_sf"/>
</dbReference>
<dbReference type="NCBIfam" id="NF008725">
    <property type="entry name" value="PRK11727.1"/>
    <property type="match status" value="1"/>
</dbReference>
<dbReference type="PANTHER" id="PTHR13393:SF0">
    <property type="entry name" value="RNA N6-ADENOSINE-METHYLTRANSFERASE METTL16"/>
    <property type="match status" value="1"/>
</dbReference>
<dbReference type="PANTHER" id="PTHR13393">
    <property type="entry name" value="SAM-DEPENDENT METHYLTRANSFERASE"/>
    <property type="match status" value="1"/>
</dbReference>
<dbReference type="Pfam" id="PF05971">
    <property type="entry name" value="Methyltransf_10"/>
    <property type="match status" value="1"/>
</dbReference>
<dbReference type="PIRSF" id="PIRSF029038">
    <property type="entry name" value="Mtase_YbiN_prd"/>
    <property type="match status" value="1"/>
</dbReference>
<dbReference type="SUPFAM" id="SSF53335">
    <property type="entry name" value="S-adenosyl-L-methionine-dependent methyltransferases"/>
    <property type="match status" value="1"/>
</dbReference>
<gene>
    <name evidence="1" type="primary">rlmF</name>
    <name type="ordered locus">VV1488</name>
</gene>
<proteinExistence type="inferred from homology"/>
<evidence type="ECO:0000255" key="1">
    <source>
        <dbReference type="HAMAP-Rule" id="MF_01848"/>
    </source>
</evidence>
<evidence type="ECO:0000256" key="2">
    <source>
        <dbReference type="SAM" id="MobiDB-lite"/>
    </source>
</evidence>
<comment type="function">
    <text evidence="1">Specifically methylates the adenine in position 1618 of 23S rRNA.</text>
</comment>
<comment type="catalytic activity">
    <reaction evidence="1">
        <text>adenosine(1618) in 23S rRNA + S-adenosyl-L-methionine = N(6)-methyladenosine(1618) in 23S rRNA + S-adenosyl-L-homocysteine + H(+)</text>
        <dbReference type="Rhea" id="RHEA:16497"/>
        <dbReference type="Rhea" id="RHEA-COMP:10229"/>
        <dbReference type="Rhea" id="RHEA-COMP:10231"/>
        <dbReference type="ChEBI" id="CHEBI:15378"/>
        <dbReference type="ChEBI" id="CHEBI:57856"/>
        <dbReference type="ChEBI" id="CHEBI:59789"/>
        <dbReference type="ChEBI" id="CHEBI:74411"/>
        <dbReference type="ChEBI" id="CHEBI:74449"/>
        <dbReference type="EC" id="2.1.1.181"/>
    </reaction>
</comment>
<comment type="subcellular location">
    <subcellularLocation>
        <location evidence="1">Cytoplasm</location>
    </subcellularLocation>
</comment>
<comment type="similarity">
    <text evidence="1">Belongs to the methyltransferase superfamily. METTL16/RlmF family.</text>
</comment>
<keyword id="KW-0963">Cytoplasm</keyword>
<keyword id="KW-0489">Methyltransferase</keyword>
<keyword id="KW-0698">rRNA processing</keyword>
<keyword id="KW-0949">S-adenosyl-L-methionine</keyword>
<keyword id="KW-0808">Transferase</keyword>
<sequence>MTNKRKSAKPLEPAKRTPKLRTKKSRDLSASESSCDFVKVTRAGLHSRNKHQGRYDFAKLTQALPSLAPFVIKNPKGEASISFSDSTAVKMLNKALLSAHYQVANWDIPAGYLCPPIPGRADYIHRLAELLEGEVKGTFPHEKVQALDIGVGANAIYPIIAICDYRWRYTGSDVDPKSIESAQRIADSNPVLQGQLELKLQDQSQHIFQGIIGPTDYFHVTTCNPPFHASAQEAAFGTQRKLDNLAANRLKKGVTAKAGSQKISKNKPILNFGGQNSELWCQGGESSFLKRMANESERFAHQVLWFSTLVSKKDNVRPLRKQLEKLGVRSIRVVEMSQGQKVSRFVAWSFMDKLQRGEWIKLRG</sequence>
<feature type="chain" id="PRO_0000349979" description="Ribosomal RNA large subunit methyltransferase F">
    <location>
        <begin position="1"/>
        <end position="364"/>
    </location>
</feature>
<feature type="region of interest" description="Disordered" evidence="2">
    <location>
        <begin position="1"/>
        <end position="28"/>
    </location>
</feature>
<name>RLMF_VIBVY</name>
<accession>Q7MLD9</accession>
<reference key="1">
    <citation type="journal article" date="2003" name="Genome Res.">
        <title>Comparative genome analysis of Vibrio vulnificus, a marine pathogen.</title>
        <authorList>
            <person name="Chen C.-Y."/>
            <person name="Wu K.-M."/>
            <person name="Chang Y.-C."/>
            <person name="Chang C.-H."/>
            <person name="Tsai H.-C."/>
            <person name="Liao T.-L."/>
            <person name="Liu Y.-M."/>
            <person name="Chen H.-J."/>
            <person name="Shen A.B.-T."/>
            <person name="Li J.-C."/>
            <person name="Su T.-L."/>
            <person name="Shao C.-P."/>
            <person name="Lee C.-T."/>
            <person name="Hor L.-I."/>
            <person name="Tsai S.-F."/>
        </authorList>
    </citation>
    <scope>NUCLEOTIDE SEQUENCE [LARGE SCALE GENOMIC DNA]</scope>
    <source>
        <strain>YJ016</strain>
    </source>
</reference>